<feature type="chain" id="PRO_0000209265" description="Bifunctional glutamine synthetase adenylyltransferase/adenylyl-removing enzyme">
    <location>
        <begin position="1"/>
        <end position="957"/>
    </location>
</feature>
<feature type="region of interest" description="Adenylyl removase" evidence="1">
    <location>
        <begin position="1"/>
        <end position="449"/>
    </location>
</feature>
<feature type="region of interest" description="Adenylyl transferase" evidence="1">
    <location>
        <begin position="457"/>
        <end position="957"/>
    </location>
</feature>
<comment type="function">
    <text evidence="1">Involved in the regulation of glutamine synthetase GlnA, a key enzyme in the process to assimilate ammonia. When cellular nitrogen levels are high, the C-terminal adenylyl transferase (AT) inactivates GlnA by covalent transfer of an adenylyl group from ATP to specific tyrosine residue of GlnA, thus reducing its activity. Conversely, when nitrogen levels are low, the N-terminal adenylyl removase (AR) activates GlnA by removing the adenylyl group by phosphorolysis, increasing its activity. The regulatory region of GlnE binds the signal transduction protein PII (GlnB) which indicates the nitrogen status of the cell.</text>
</comment>
<comment type="catalytic activity">
    <reaction evidence="1">
        <text>[glutamine synthetase]-O(4)-(5'-adenylyl)-L-tyrosine + phosphate = [glutamine synthetase]-L-tyrosine + ADP</text>
        <dbReference type="Rhea" id="RHEA:43716"/>
        <dbReference type="Rhea" id="RHEA-COMP:10660"/>
        <dbReference type="Rhea" id="RHEA-COMP:10661"/>
        <dbReference type="ChEBI" id="CHEBI:43474"/>
        <dbReference type="ChEBI" id="CHEBI:46858"/>
        <dbReference type="ChEBI" id="CHEBI:83624"/>
        <dbReference type="ChEBI" id="CHEBI:456216"/>
        <dbReference type="EC" id="2.7.7.89"/>
    </reaction>
</comment>
<comment type="catalytic activity">
    <reaction evidence="1">
        <text>[glutamine synthetase]-L-tyrosine + ATP = [glutamine synthetase]-O(4)-(5'-adenylyl)-L-tyrosine + diphosphate</text>
        <dbReference type="Rhea" id="RHEA:18589"/>
        <dbReference type="Rhea" id="RHEA-COMP:10660"/>
        <dbReference type="Rhea" id="RHEA-COMP:10661"/>
        <dbReference type="ChEBI" id="CHEBI:30616"/>
        <dbReference type="ChEBI" id="CHEBI:33019"/>
        <dbReference type="ChEBI" id="CHEBI:46858"/>
        <dbReference type="ChEBI" id="CHEBI:83624"/>
        <dbReference type="EC" id="2.7.7.42"/>
    </reaction>
</comment>
<comment type="cofactor">
    <cofactor evidence="1">
        <name>Mg(2+)</name>
        <dbReference type="ChEBI" id="CHEBI:18420"/>
    </cofactor>
</comment>
<comment type="similarity">
    <text evidence="1">Belongs to the GlnE family.</text>
</comment>
<accession>Q6LUZ6</accession>
<dbReference type="EC" id="2.7.7.89" evidence="1"/>
<dbReference type="EC" id="2.7.7.42" evidence="1"/>
<dbReference type="EMBL" id="CR378664">
    <property type="protein sequence ID" value="CAG18879.1"/>
    <property type="molecule type" value="Genomic_DNA"/>
</dbReference>
<dbReference type="RefSeq" id="WP_011217235.1">
    <property type="nucleotide sequence ID" value="NC_006370.1"/>
</dbReference>
<dbReference type="SMR" id="Q6LUZ6"/>
<dbReference type="STRING" id="298386.PBPRA0448"/>
<dbReference type="KEGG" id="ppr:PBPRA0448"/>
<dbReference type="eggNOG" id="COG1391">
    <property type="taxonomic scope" value="Bacteria"/>
</dbReference>
<dbReference type="HOGENOM" id="CLU_006233_0_1_6"/>
<dbReference type="Proteomes" id="UP000000593">
    <property type="component" value="Chromosome 1"/>
</dbReference>
<dbReference type="GO" id="GO:0005829">
    <property type="term" value="C:cytosol"/>
    <property type="evidence" value="ECO:0007669"/>
    <property type="project" value="TreeGrafter"/>
</dbReference>
<dbReference type="GO" id="GO:0008882">
    <property type="term" value="F:[glutamate-ammonia-ligase] adenylyltransferase activity"/>
    <property type="evidence" value="ECO:0007669"/>
    <property type="project" value="UniProtKB-UniRule"/>
</dbReference>
<dbReference type="GO" id="GO:0047388">
    <property type="term" value="F:[glutamine synthetase]-adenylyl-L-tyrosine phosphorylase activity"/>
    <property type="evidence" value="ECO:0007669"/>
    <property type="project" value="UniProtKB-EC"/>
</dbReference>
<dbReference type="GO" id="GO:0005524">
    <property type="term" value="F:ATP binding"/>
    <property type="evidence" value="ECO:0007669"/>
    <property type="project" value="UniProtKB-UniRule"/>
</dbReference>
<dbReference type="GO" id="GO:0000287">
    <property type="term" value="F:magnesium ion binding"/>
    <property type="evidence" value="ECO:0007669"/>
    <property type="project" value="UniProtKB-UniRule"/>
</dbReference>
<dbReference type="GO" id="GO:0000820">
    <property type="term" value="P:regulation of glutamine family amino acid metabolic process"/>
    <property type="evidence" value="ECO:0007669"/>
    <property type="project" value="UniProtKB-UniRule"/>
</dbReference>
<dbReference type="CDD" id="cd05401">
    <property type="entry name" value="NT_GlnE_GlnD_like"/>
    <property type="match status" value="2"/>
</dbReference>
<dbReference type="FunFam" id="1.20.120.1510:FF:000001">
    <property type="entry name" value="Bifunctional glutamine synthetase adenylyltransferase/adenylyl-removing enzyme"/>
    <property type="match status" value="1"/>
</dbReference>
<dbReference type="FunFam" id="1.20.120.330:FF:000005">
    <property type="entry name" value="Bifunctional glutamine synthetase adenylyltransferase/adenylyl-removing enzyme"/>
    <property type="match status" value="1"/>
</dbReference>
<dbReference type="FunFam" id="1.20.120.330:FF:000008">
    <property type="entry name" value="Bifunctional glutamine synthetase adenylyltransferase/adenylyl-removing enzyme"/>
    <property type="match status" value="1"/>
</dbReference>
<dbReference type="FunFam" id="3.30.460.10:FF:000009">
    <property type="entry name" value="Bifunctional glutamine synthetase adenylyltransferase/adenylyl-removing enzyme"/>
    <property type="match status" value="1"/>
</dbReference>
<dbReference type="FunFam" id="3.30.460.10:FF:000014">
    <property type="entry name" value="Bifunctional glutamine synthetase adenylyltransferase/adenylyl-removing enzyme"/>
    <property type="match status" value="1"/>
</dbReference>
<dbReference type="Gene3D" id="1.20.120.1510">
    <property type="match status" value="1"/>
</dbReference>
<dbReference type="Gene3D" id="3.30.460.10">
    <property type="entry name" value="Beta Polymerase, domain 2"/>
    <property type="match status" value="2"/>
</dbReference>
<dbReference type="Gene3D" id="1.10.4050.10">
    <property type="entry name" value="Glutamine synthase adenylyltransferase GlnE"/>
    <property type="match status" value="1"/>
</dbReference>
<dbReference type="Gene3D" id="1.20.120.330">
    <property type="entry name" value="Nucleotidyltransferases domain 2"/>
    <property type="match status" value="2"/>
</dbReference>
<dbReference type="HAMAP" id="MF_00802">
    <property type="entry name" value="GlnE"/>
    <property type="match status" value="1"/>
</dbReference>
<dbReference type="InterPro" id="IPR023057">
    <property type="entry name" value="GlnE"/>
</dbReference>
<dbReference type="InterPro" id="IPR005190">
    <property type="entry name" value="GlnE_rpt_dom"/>
</dbReference>
<dbReference type="InterPro" id="IPR043519">
    <property type="entry name" value="NT_sf"/>
</dbReference>
<dbReference type="InterPro" id="IPR013546">
    <property type="entry name" value="PII_UdlTrfase/GS_AdlTrfase"/>
</dbReference>
<dbReference type="NCBIfam" id="NF008292">
    <property type="entry name" value="PRK11072.1"/>
    <property type="match status" value="1"/>
</dbReference>
<dbReference type="PANTHER" id="PTHR30621:SF0">
    <property type="entry name" value="BIFUNCTIONAL GLUTAMINE SYNTHETASE ADENYLYLTRANSFERASE_ADENYLYL-REMOVING ENZYME"/>
    <property type="match status" value="1"/>
</dbReference>
<dbReference type="PANTHER" id="PTHR30621">
    <property type="entry name" value="GLUTAMINE SYNTHETASE ADENYLYLTRANSFERASE"/>
    <property type="match status" value="1"/>
</dbReference>
<dbReference type="Pfam" id="PF08335">
    <property type="entry name" value="GlnD_UR_UTase"/>
    <property type="match status" value="2"/>
</dbReference>
<dbReference type="Pfam" id="PF03710">
    <property type="entry name" value="GlnE"/>
    <property type="match status" value="2"/>
</dbReference>
<dbReference type="SUPFAM" id="SSF81301">
    <property type="entry name" value="Nucleotidyltransferase"/>
    <property type="match status" value="2"/>
</dbReference>
<dbReference type="SUPFAM" id="SSF81593">
    <property type="entry name" value="Nucleotidyltransferase substrate binding subunit/domain"/>
    <property type="match status" value="2"/>
</dbReference>
<reference key="1">
    <citation type="journal article" date="2005" name="Science">
        <title>Life at depth: Photobacterium profundum genome sequence and expression analysis.</title>
        <authorList>
            <person name="Vezzi A."/>
            <person name="Campanaro S."/>
            <person name="D'Angelo M."/>
            <person name="Simonato F."/>
            <person name="Vitulo N."/>
            <person name="Lauro F.M."/>
            <person name="Cestaro A."/>
            <person name="Malacrida G."/>
            <person name="Simionati B."/>
            <person name="Cannata N."/>
            <person name="Romualdi C."/>
            <person name="Bartlett D.H."/>
            <person name="Valle G."/>
        </authorList>
    </citation>
    <scope>NUCLEOTIDE SEQUENCE [LARGE SCALE GENOMIC DNA]</scope>
    <source>
        <strain>ATCC BAA-1253 / SS9</strain>
    </source>
</reference>
<name>GLNE_PHOPR</name>
<proteinExistence type="inferred from homology"/>
<keyword id="KW-0067">ATP-binding</keyword>
<keyword id="KW-0460">Magnesium</keyword>
<keyword id="KW-0511">Multifunctional enzyme</keyword>
<keyword id="KW-0547">Nucleotide-binding</keyword>
<keyword id="KW-0548">Nucleotidyltransferase</keyword>
<keyword id="KW-1185">Reference proteome</keyword>
<keyword id="KW-0808">Transferase</keyword>
<protein>
    <recommendedName>
        <fullName evidence="1">Bifunctional glutamine synthetase adenylyltransferase/adenylyl-removing enzyme</fullName>
    </recommendedName>
    <alternativeName>
        <fullName evidence="1">ATP:glutamine synthetase adenylyltransferase</fullName>
    </alternativeName>
    <alternativeName>
        <fullName evidence="1">ATase</fullName>
    </alternativeName>
    <domain>
        <recommendedName>
            <fullName evidence="1">Glutamine synthetase adenylyl-L-tyrosine phosphorylase</fullName>
            <ecNumber evidence="1">2.7.7.89</ecNumber>
        </recommendedName>
        <alternativeName>
            <fullName evidence="1">Adenylyl removase</fullName>
            <shortName evidence="1">AR</shortName>
            <shortName evidence="1">AT-N</shortName>
        </alternativeName>
    </domain>
    <domain>
        <recommendedName>
            <fullName evidence="1">Glutamine synthetase adenylyl transferase</fullName>
            <ecNumber evidence="1">2.7.7.42</ecNumber>
        </recommendedName>
        <alternativeName>
            <fullName evidence="1">Adenylyl transferase</fullName>
            <shortName evidence="1">AT</shortName>
            <shortName evidence="1">AT-C</shortName>
        </alternativeName>
    </domain>
</protein>
<organism>
    <name type="scientific">Photobacterium profundum (strain SS9)</name>
    <dbReference type="NCBI Taxonomy" id="298386"/>
    <lineage>
        <taxon>Bacteria</taxon>
        <taxon>Pseudomonadati</taxon>
        <taxon>Pseudomonadota</taxon>
        <taxon>Gammaproteobacteria</taxon>
        <taxon>Vibrionales</taxon>
        <taxon>Vibrionaceae</taxon>
        <taxon>Photobacterium</taxon>
    </lineage>
</organism>
<evidence type="ECO:0000255" key="1">
    <source>
        <dbReference type="HAMAP-Rule" id="MF_00802"/>
    </source>
</evidence>
<gene>
    <name evidence="1" type="primary">glnE</name>
    <name type="ordered locus">PBPRA0448</name>
</gene>
<sequence length="957" mass="108957">MTQHLERPELLSIAATKALDKLQQAHPELLAQWPTERQNELETVIGLSDFIASSLVCDGQLLLWLSEHLDDKEHAEQYRQQLETKLATTADDVGLMRQLRAFRRQEMVWIAWRDFTNKSTLEQSLAHLSQLAEALIMEAYQWLYNQCCKEWGTPTNSAGEAQPMLVLGMGKLGGGELNFSSDIDLIFTYPENGDTVGGRRSMANAQFFTRLGQRLIKALDQPTYDGFCYRVDMRLRPFGDSGPLVMSYAALEDYYQEQGRDWERYAMIKARVMGRESFTQYQELRQMLRPFVFRRYIDFSAIQALRRMKSMISSEVRRRGLSNNIKLGAGGIREVEFIAQSFQLIRGGREPSLRGRGLLETLAAMKQLALLPEKQIEHLEQGYCFLRKLENLLQAIDDKQTQTLPDKPLDQIRLAFAMGYADWQSLFEAIELHMSAVHLVFDDIIGTDEDDAGCSVSEQYNEMWTMAKDEDVLLNIMAELEAPDSANQVSTILGMKAELSKRTLGPRGREVLTRLMPEVLSRIVPRPDASAVLARVTKLIVRVATRTTYLELLGEHPAALGQLIRLCAASPMVAEQLTQYPILLDELLDPQHLYNPTPLDQYGDELREYLARIPEEDMEQQMEAIRQYKQAQLLRIAAADIAGALPLMAVSDHLTYLAEAIITAVVNQAWLQMAEKYGEPTHLVDRNGKGFGVIGYGKVGGWELGYGSDLDVVFLHDCPADIYTNGKKEIDGRQFYLRLAQRIVHLFSTRTSSGVLYEIDVRLRPSGASGLLVSTVESFDEYQQKEAWTWEHQALVRARMIYGDVPLFDAFSDVRKRILTQPRDTQSLQVDVVSMRHKMRVHLGSKKNGMFGLKQDKGGITDIEFLAQYLVLQHSHTEPYLTRWSDNVRIFDTMAECEVLSLSQASALKQAYCVMRDDIHRLNLLGLPVYVDESQFVTERETVQQIWQEYLVPSSDE</sequence>